<evidence type="ECO:0000255" key="1">
    <source>
        <dbReference type="HAMAP-Rule" id="MF_01147"/>
    </source>
</evidence>
<dbReference type="EC" id="2.5.1.145" evidence="1"/>
<dbReference type="EMBL" id="CP000114">
    <property type="protein sequence ID" value="ABA45933.1"/>
    <property type="molecule type" value="Genomic_DNA"/>
</dbReference>
<dbReference type="RefSeq" id="WP_000609732.1">
    <property type="nucleotide sequence ID" value="NC_007432.1"/>
</dbReference>
<dbReference type="SMR" id="Q3K1W8"/>
<dbReference type="KEGG" id="sak:SAK_0863"/>
<dbReference type="HOGENOM" id="CLU_013386_0_1_9"/>
<dbReference type="UniPathway" id="UPA00664"/>
<dbReference type="GO" id="GO:0005886">
    <property type="term" value="C:plasma membrane"/>
    <property type="evidence" value="ECO:0007669"/>
    <property type="project" value="UniProtKB-SubCell"/>
</dbReference>
<dbReference type="GO" id="GO:0008961">
    <property type="term" value="F:phosphatidylglycerol-prolipoprotein diacylglyceryl transferase activity"/>
    <property type="evidence" value="ECO:0007669"/>
    <property type="project" value="UniProtKB-UniRule"/>
</dbReference>
<dbReference type="GO" id="GO:0042158">
    <property type="term" value="P:lipoprotein biosynthetic process"/>
    <property type="evidence" value="ECO:0007669"/>
    <property type="project" value="UniProtKB-UniRule"/>
</dbReference>
<dbReference type="HAMAP" id="MF_01147">
    <property type="entry name" value="Lgt"/>
    <property type="match status" value="1"/>
</dbReference>
<dbReference type="InterPro" id="IPR001640">
    <property type="entry name" value="Lgt"/>
</dbReference>
<dbReference type="NCBIfam" id="TIGR00544">
    <property type="entry name" value="lgt"/>
    <property type="match status" value="1"/>
</dbReference>
<dbReference type="PANTHER" id="PTHR30589:SF0">
    <property type="entry name" value="PHOSPHATIDYLGLYCEROL--PROLIPOPROTEIN DIACYLGLYCERYL TRANSFERASE"/>
    <property type="match status" value="1"/>
</dbReference>
<dbReference type="PANTHER" id="PTHR30589">
    <property type="entry name" value="PROLIPOPROTEIN DIACYLGLYCERYL TRANSFERASE"/>
    <property type="match status" value="1"/>
</dbReference>
<dbReference type="Pfam" id="PF01790">
    <property type="entry name" value="LGT"/>
    <property type="match status" value="1"/>
</dbReference>
<dbReference type="PROSITE" id="PS01311">
    <property type="entry name" value="LGT"/>
    <property type="match status" value="1"/>
</dbReference>
<accession>Q3K1W8</accession>
<organism>
    <name type="scientific">Streptococcus agalactiae serotype Ia (strain ATCC 27591 / A909 / CDC SS700)</name>
    <dbReference type="NCBI Taxonomy" id="205921"/>
    <lineage>
        <taxon>Bacteria</taxon>
        <taxon>Bacillati</taxon>
        <taxon>Bacillota</taxon>
        <taxon>Bacilli</taxon>
        <taxon>Lactobacillales</taxon>
        <taxon>Streptococcaceae</taxon>
        <taxon>Streptococcus</taxon>
    </lineage>
</organism>
<keyword id="KW-1003">Cell membrane</keyword>
<keyword id="KW-0472">Membrane</keyword>
<keyword id="KW-0808">Transferase</keyword>
<keyword id="KW-0812">Transmembrane</keyword>
<keyword id="KW-1133">Transmembrane helix</keyword>
<proteinExistence type="inferred from homology"/>
<gene>
    <name evidence="1" type="primary">lgt</name>
    <name type="ordered locus">SAK_0863</name>
</gene>
<feature type="chain" id="PRO_1000053508" description="Phosphatidylglycerol--prolipoprotein diacylglyceryl transferase">
    <location>
        <begin position="1"/>
        <end position="257"/>
    </location>
</feature>
<feature type="transmembrane region" description="Helical" evidence="1">
    <location>
        <begin position="12"/>
        <end position="32"/>
    </location>
</feature>
<feature type="transmembrane region" description="Helical" evidence="1">
    <location>
        <begin position="49"/>
        <end position="69"/>
    </location>
</feature>
<feature type="transmembrane region" description="Helical" evidence="1">
    <location>
        <begin position="83"/>
        <end position="103"/>
    </location>
</feature>
<feature type="transmembrane region" description="Helical" evidence="1">
    <location>
        <begin position="109"/>
        <end position="129"/>
    </location>
</feature>
<feature type="transmembrane region" description="Helical" evidence="1">
    <location>
        <begin position="167"/>
        <end position="187"/>
    </location>
</feature>
<feature type="transmembrane region" description="Helical" evidence="1">
    <location>
        <begin position="197"/>
        <end position="217"/>
    </location>
</feature>
<feature type="transmembrane region" description="Helical" evidence="1">
    <location>
        <begin position="226"/>
        <end position="246"/>
    </location>
</feature>
<feature type="binding site" evidence="1">
    <location>
        <position position="131"/>
    </location>
    <ligand>
        <name>a 1,2-diacyl-sn-glycero-3-phospho-(1'-sn-glycerol)</name>
        <dbReference type="ChEBI" id="CHEBI:64716"/>
    </ligand>
</feature>
<reference key="1">
    <citation type="journal article" date="2005" name="Proc. Natl. Acad. Sci. U.S.A.">
        <title>Genome analysis of multiple pathogenic isolates of Streptococcus agalactiae: implications for the microbial 'pan-genome'.</title>
        <authorList>
            <person name="Tettelin H."/>
            <person name="Masignani V."/>
            <person name="Cieslewicz M.J."/>
            <person name="Donati C."/>
            <person name="Medini D."/>
            <person name="Ward N.L."/>
            <person name="Angiuoli S.V."/>
            <person name="Crabtree J."/>
            <person name="Jones A.L."/>
            <person name="Durkin A.S."/>
            <person name="DeBoy R.T."/>
            <person name="Davidsen T.M."/>
            <person name="Mora M."/>
            <person name="Scarselli M."/>
            <person name="Margarit y Ros I."/>
            <person name="Peterson J.D."/>
            <person name="Hauser C.R."/>
            <person name="Sundaram J.P."/>
            <person name="Nelson W.C."/>
            <person name="Madupu R."/>
            <person name="Brinkac L.M."/>
            <person name="Dodson R.J."/>
            <person name="Rosovitz M.J."/>
            <person name="Sullivan S.A."/>
            <person name="Daugherty S.C."/>
            <person name="Haft D.H."/>
            <person name="Selengut J."/>
            <person name="Gwinn M.L."/>
            <person name="Zhou L."/>
            <person name="Zafar N."/>
            <person name="Khouri H."/>
            <person name="Radune D."/>
            <person name="Dimitrov G."/>
            <person name="Watkins K."/>
            <person name="O'Connor K.J."/>
            <person name="Smith S."/>
            <person name="Utterback T.R."/>
            <person name="White O."/>
            <person name="Rubens C.E."/>
            <person name="Grandi G."/>
            <person name="Madoff L.C."/>
            <person name="Kasper D.L."/>
            <person name="Telford J.L."/>
            <person name="Wessels M.R."/>
            <person name="Rappuoli R."/>
            <person name="Fraser C.M."/>
        </authorList>
    </citation>
    <scope>NUCLEOTIDE SEQUENCE [LARGE SCALE GENOMIC DNA]</scope>
    <source>
        <strain>ATCC 27591 / A909 / CDC SS700</strain>
    </source>
</reference>
<sequence>MINPVAIRLGPFSIRWYAICIVSGMLLAVYLAMKEAPRKNIKSDDILDFILMAFPLSIVGARIYYVIFEWAYYSKHPVEIIAIWNGGIAIYGGLITGAILLVIFSYRRLINPIDFLDIAAPGVMIAQAIGRWGNFINQEAYGRAVKNLNYVPNFIKNQMYIDGAYRVPTFLYESLWNFLGFVIIMSIRHRPRTLKQGEVACFYLVWYGCGRFIIEGMRTDSLYLAGLRVSQWLSVILVIIGIVMIIYRRREQHISYY</sequence>
<comment type="function">
    <text evidence="1">Catalyzes the transfer of the diacylglyceryl group from phosphatidylglycerol to the sulfhydryl group of the N-terminal cysteine of a prolipoprotein, the first step in the formation of mature lipoproteins.</text>
</comment>
<comment type="catalytic activity">
    <reaction evidence="1">
        <text>L-cysteinyl-[prolipoprotein] + a 1,2-diacyl-sn-glycero-3-phospho-(1'-sn-glycerol) = an S-1,2-diacyl-sn-glyceryl-L-cysteinyl-[prolipoprotein] + sn-glycerol 1-phosphate + H(+)</text>
        <dbReference type="Rhea" id="RHEA:56712"/>
        <dbReference type="Rhea" id="RHEA-COMP:14679"/>
        <dbReference type="Rhea" id="RHEA-COMP:14680"/>
        <dbReference type="ChEBI" id="CHEBI:15378"/>
        <dbReference type="ChEBI" id="CHEBI:29950"/>
        <dbReference type="ChEBI" id="CHEBI:57685"/>
        <dbReference type="ChEBI" id="CHEBI:64716"/>
        <dbReference type="ChEBI" id="CHEBI:140658"/>
        <dbReference type="EC" id="2.5.1.145"/>
    </reaction>
</comment>
<comment type="pathway">
    <text evidence="1">Protein modification; lipoprotein biosynthesis (diacylglyceryl transfer).</text>
</comment>
<comment type="subcellular location">
    <subcellularLocation>
        <location evidence="1">Cell membrane</location>
        <topology evidence="1">Multi-pass membrane protein</topology>
    </subcellularLocation>
</comment>
<comment type="similarity">
    <text evidence="1">Belongs to the Lgt family.</text>
</comment>
<protein>
    <recommendedName>
        <fullName evidence="1">Phosphatidylglycerol--prolipoprotein diacylglyceryl transferase</fullName>
        <ecNumber evidence="1">2.5.1.145</ecNumber>
    </recommendedName>
</protein>
<name>LGT_STRA1</name>